<evidence type="ECO:0000255" key="1">
    <source>
        <dbReference type="HAMAP-Rule" id="MF_01568"/>
    </source>
</evidence>
<gene>
    <name type="ordered locus">SPG_1812</name>
</gene>
<reference key="1">
    <citation type="journal article" date="2001" name="Microb. Drug Resist.">
        <title>Annotated draft genomic sequence from a Streptococcus pneumoniae type 19F clinical isolate.</title>
        <authorList>
            <person name="Dopazo J."/>
            <person name="Mendoza A."/>
            <person name="Herrero J."/>
            <person name="Caldara F."/>
            <person name="Humbert Y."/>
            <person name="Friedli L."/>
            <person name="Guerrier M."/>
            <person name="Grand-Schenk E."/>
            <person name="Gandin C."/>
            <person name="de Francesco M."/>
            <person name="Polissi A."/>
            <person name="Buell G."/>
            <person name="Feger G."/>
            <person name="Garcia E."/>
            <person name="Peitsch M."/>
            <person name="Garcia-Bustos J.F."/>
        </authorList>
    </citation>
    <scope>NUCLEOTIDE SEQUENCE [LARGE SCALE GENOMIC DNA]</scope>
    <source>
        <strain>G54</strain>
    </source>
</reference>
<reference key="2">
    <citation type="submission" date="2008-03" db="EMBL/GenBank/DDBJ databases">
        <title>Pneumococcal beta glucoside metabolism investigated by whole genome comparison.</title>
        <authorList>
            <person name="Mulas L."/>
            <person name="Trappetti C."/>
            <person name="Hakenbeck R."/>
            <person name="Iannelli F."/>
            <person name="Pozzi G."/>
            <person name="Davidsen T.M."/>
            <person name="Tettelin H."/>
            <person name="Oggioni M."/>
        </authorList>
    </citation>
    <scope>NUCLEOTIDE SEQUENCE [LARGE SCALE GENOMIC DNA]</scope>
    <source>
        <strain>G54</strain>
    </source>
</reference>
<dbReference type="EC" id="3.6.1.15" evidence="1"/>
<dbReference type="EC" id="3.6.1.6" evidence="1"/>
<dbReference type="EMBL" id="CP001015">
    <property type="protein sequence ID" value="ACF55570.1"/>
    <property type="molecule type" value="Genomic_DNA"/>
</dbReference>
<dbReference type="KEGG" id="spx:SPG_1812"/>
<dbReference type="HOGENOM" id="CLU_109787_1_0_9"/>
<dbReference type="GO" id="GO:0000287">
    <property type="term" value="F:magnesium ion binding"/>
    <property type="evidence" value="ECO:0007669"/>
    <property type="project" value="UniProtKB-UniRule"/>
</dbReference>
<dbReference type="GO" id="GO:0017110">
    <property type="term" value="F:nucleoside diphosphate phosphatase activity"/>
    <property type="evidence" value="ECO:0007669"/>
    <property type="project" value="UniProtKB-UniRule"/>
</dbReference>
<dbReference type="GO" id="GO:0017111">
    <property type="term" value="F:ribonucleoside triphosphate phosphatase activity"/>
    <property type="evidence" value="ECO:0007669"/>
    <property type="project" value="UniProtKB-UniRule"/>
</dbReference>
<dbReference type="Gene3D" id="2.40.380.10">
    <property type="entry name" value="FomD-like"/>
    <property type="match status" value="1"/>
</dbReference>
<dbReference type="HAMAP" id="MF_01568">
    <property type="entry name" value="Ntdp"/>
    <property type="match status" value="1"/>
</dbReference>
<dbReference type="InterPro" id="IPR007295">
    <property type="entry name" value="DUF402"/>
</dbReference>
<dbReference type="InterPro" id="IPR035930">
    <property type="entry name" value="FomD-like_sf"/>
</dbReference>
<dbReference type="InterPro" id="IPR050212">
    <property type="entry name" value="Ntdp-like"/>
</dbReference>
<dbReference type="InterPro" id="IPR016882">
    <property type="entry name" value="SA1684"/>
</dbReference>
<dbReference type="NCBIfam" id="NF010183">
    <property type="entry name" value="PRK13662.1"/>
    <property type="match status" value="1"/>
</dbReference>
<dbReference type="PANTHER" id="PTHR39159">
    <property type="match status" value="1"/>
</dbReference>
<dbReference type="PANTHER" id="PTHR39159:SF1">
    <property type="entry name" value="UPF0374 PROTEIN YGAC"/>
    <property type="match status" value="1"/>
</dbReference>
<dbReference type="Pfam" id="PF04167">
    <property type="entry name" value="DUF402"/>
    <property type="match status" value="1"/>
</dbReference>
<dbReference type="PIRSF" id="PIRSF028345">
    <property type="entry name" value="UCP028345"/>
    <property type="match status" value="1"/>
</dbReference>
<dbReference type="SUPFAM" id="SSF159234">
    <property type="entry name" value="FomD-like"/>
    <property type="match status" value="1"/>
</dbReference>
<sequence>MKLPKEGDFITIQSYKHDGSLHRTWRDTMVLKTTENAIIGVNDHTLVTESDGRRWVTREPAIVYFHKKYWFNIIAMIRDNGTSYYCNMASPYYXDEXALKYIDYDLDVKIFTDGEKRXLDVEEYERHKRKMNYSDDLDYILKEHVKILVXWINNGRGPFSEAYVNIWYKRYVELKNR</sequence>
<organism>
    <name type="scientific">Streptococcus pneumoniae serotype 19F (strain G54)</name>
    <dbReference type="NCBI Taxonomy" id="512566"/>
    <lineage>
        <taxon>Bacteria</taxon>
        <taxon>Bacillati</taxon>
        <taxon>Bacillota</taxon>
        <taxon>Bacilli</taxon>
        <taxon>Lactobacillales</taxon>
        <taxon>Streptococcaceae</taxon>
        <taxon>Streptococcus</taxon>
    </lineage>
</organism>
<name>NTDP_STRP4</name>
<keyword id="KW-0378">Hydrolase</keyword>
<keyword id="KW-0460">Magnesium</keyword>
<keyword id="KW-0479">Metal-binding</keyword>
<proteinExistence type="inferred from homology"/>
<feature type="chain" id="PRO_1000199756" description="Nucleoside triphosphate/diphosphate phosphatase">
    <location>
        <begin position="1"/>
        <end position="177"/>
    </location>
</feature>
<feature type="active site" description="Proton donor" evidence="1">
    <location>
        <position position="23"/>
    </location>
</feature>
<feature type="binding site" evidence="1">
    <location>
        <position position="87"/>
    </location>
    <ligand>
        <name>Mg(2+)</name>
        <dbReference type="ChEBI" id="CHEBI:18420"/>
        <label>1</label>
    </ligand>
</feature>
<feature type="binding site" evidence="1">
    <location>
        <position position="103"/>
    </location>
    <ligand>
        <name>Mg(2+)</name>
        <dbReference type="ChEBI" id="CHEBI:18420"/>
        <label>1</label>
    </ligand>
</feature>
<feature type="binding site" evidence="1">
    <location>
        <position position="105"/>
    </location>
    <ligand>
        <name>Mg(2+)</name>
        <dbReference type="ChEBI" id="CHEBI:18420"/>
        <label>2</label>
    </ligand>
</feature>
<feature type="binding site" evidence="1">
    <location>
        <position position="107"/>
    </location>
    <ligand>
        <name>Mg(2+)</name>
        <dbReference type="ChEBI" id="CHEBI:18420"/>
        <label>1</label>
    </ligand>
</feature>
<feature type="binding site" evidence="1">
    <location>
        <position position="107"/>
    </location>
    <ligand>
        <name>Mg(2+)</name>
        <dbReference type="ChEBI" id="CHEBI:18420"/>
        <label>2</label>
    </ligand>
</feature>
<feature type="binding site" evidence="1">
    <location>
        <position position="120"/>
    </location>
    <ligand>
        <name>Mg(2+)</name>
        <dbReference type="ChEBI" id="CHEBI:18420"/>
        <label>2</label>
    </ligand>
</feature>
<feature type="binding site" evidence="1">
    <location>
        <position position="123"/>
    </location>
    <ligand>
        <name>Mg(2+)</name>
        <dbReference type="ChEBI" id="CHEBI:18420"/>
        <label>2</label>
    </ligand>
</feature>
<accession>B5E217</accession>
<comment type="function">
    <text evidence="1">Has nucleoside phosphatase activity towards nucleoside triphosphates and nucleoside diphosphates.</text>
</comment>
<comment type="catalytic activity">
    <reaction evidence="1">
        <text>a ribonucleoside 5'-triphosphate + H2O = a ribonucleoside 5'-diphosphate + phosphate + H(+)</text>
        <dbReference type="Rhea" id="RHEA:23680"/>
        <dbReference type="ChEBI" id="CHEBI:15377"/>
        <dbReference type="ChEBI" id="CHEBI:15378"/>
        <dbReference type="ChEBI" id="CHEBI:43474"/>
        <dbReference type="ChEBI" id="CHEBI:57930"/>
        <dbReference type="ChEBI" id="CHEBI:61557"/>
        <dbReference type="EC" id="3.6.1.15"/>
    </reaction>
</comment>
<comment type="catalytic activity">
    <reaction evidence="1">
        <text>a ribonucleoside 5'-diphosphate + H2O = a ribonucleoside 5'-phosphate + phosphate + H(+)</text>
        <dbReference type="Rhea" id="RHEA:36799"/>
        <dbReference type="ChEBI" id="CHEBI:15377"/>
        <dbReference type="ChEBI" id="CHEBI:15378"/>
        <dbReference type="ChEBI" id="CHEBI:43474"/>
        <dbReference type="ChEBI" id="CHEBI:57930"/>
        <dbReference type="ChEBI" id="CHEBI:58043"/>
        <dbReference type="EC" id="3.6.1.6"/>
    </reaction>
</comment>
<comment type="cofactor">
    <cofactor evidence="1">
        <name>Mg(2+)</name>
        <dbReference type="ChEBI" id="CHEBI:18420"/>
    </cofactor>
</comment>
<comment type="similarity">
    <text evidence="1">Belongs to the Ntdp family.</text>
</comment>
<protein>
    <recommendedName>
        <fullName evidence="1">Nucleoside triphosphate/diphosphate phosphatase</fullName>
        <ecNumber evidence="1">3.6.1.15</ecNumber>
        <ecNumber evidence="1">3.6.1.6</ecNumber>
    </recommendedName>
</protein>